<accession>Q3Z269</accession>
<sequence>MPTKRFDKKHWKMVVVLLAICGAMLLLRWAAMIWG</sequence>
<organism>
    <name type="scientific">Shigella sonnei (strain Ss046)</name>
    <dbReference type="NCBI Taxonomy" id="300269"/>
    <lineage>
        <taxon>Bacteria</taxon>
        <taxon>Pseudomonadati</taxon>
        <taxon>Pseudomonadota</taxon>
        <taxon>Gammaproteobacteria</taxon>
        <taxon>Enterobacterales</taxon>
        <taxon>Enterobacteriaceae</taxon>
        <taxon>Shigella</taxon>
    </lineage>
</organism>
<protein>
    <recommendedName>
        <fullName>Uncharacterized protein YniD</fullName>
    </recommendedName>
</protein>
<proteinExistence type="predicted"/>
<dbReference type="EMBL" id="CP000038">
    <property type="protein sequence ID" value="AAZ88143.1"/>
    <property type="status" value="ALT_INIT"/>
    <property type="molecule type" value="Genomic_DNA"/>
</dbReference>
<dbReference type="RefSeq" id="WP_001142445.1">
    <property type="nucleotide sequence ID" value="NC_007384.1"/>
</dbReference>
<dbReference type="SMR" id="Q3Z269"/>
<dbReference type="GeneID" id="93775934"/>
<dbReference type="KEGG" id="ssn:SSON_1436"/>
<dbReference type="HOGENOM" id="CLU_2751364_0_0_6"/>
<dbReference type="Proteomes" id="UP000002529">
    <property type="component" value="Chromosome"/>
</dbReference>
<dbReference type="GO" id="GO:0005886">
    <property type="term" value="C:plasma membrane"/>
    <property type="evidence" value="ECO:0007669"/>
    <property type="project" value="UniProtKB-SubCell"/>
</dbReference>
<dbReference type="InterPro" id="IPR048084">
    <property type="entry name" value="YniD-like"/>
</dbReference>
<dbReference type="NCBIfam" id="NF041491">
    <property type="entry name" value="membrane_YniD"/>
    <property type="match status" value="1"/>
</dbReference>
<comment type="subcellular location">
    <subcellularLocation>
        <location evidence="2">Cell membrane</location>
        <topology evidence="2">Single-pass membrane protein</topology>
    </subcellularLocation>
</comment>
<comment type="sequence caution" evidence="2">
    <conflict type="erroneous initiation">
        <sequence resource="EMBL-CDS" id="AAZ88143"/>
    </conflict>
    <text>Extended N-terminus.</text>
</comment>
<feature type="chain" id="PRO_0000246683" description="Uncharacterized protein YniD">
    <location>
        <begin position="1"/>
        <end position="35"/>
    </location>
</feature>
<feature type="transmembrane region" description="Helical" evidence="1">
    <location>
        <begin position="14"/>
        <end position="34"/>
    </location>
</feature>
<reference key="1">
    <citation type="journal article" date="2005" name="Nucleic Acids Res.">
        <title>Genome dynamics and diversity of Shigella species, the etiologic agents of bacillary dysentery.</title>
        <authorList>
            <person name="Yang F."/>
            <person name="Yang J."/>
            <person name="Zhang X."/>
            <person name="Chen L."/>
            <person name="Jiang Y."/>
            <person name="Yan Y."/>
            <person name="Tang X."/>
            <person name="Wang J."/>
            <person name="Xiong Z."/>
            <person name="Dong J."/>
            <person name="Xue Y."/>
            <person name="Zhu Y."/>
            <person name="Xu X."/>
            <person name="Sun L."/>
            <person name="Chen S."/>
            <person name="Nie H."/>
            <person name="Peng J."/>
            <person name="Xu J."/>
            <person name="Wang Y."/>
            <person name="Yuan Z."/>
            <person name="Wen Y."/>
            <person name="Yao Z."/>
            <person name="Shen Y."/>
            <person name="Qiang B."/>
            <person name="Hou Y."/>
            <person name="Yu J."/>
            <person name="Jin Q."/>
        </authorList>
    </citation>
    <scope>NUCLEOTIDE SEQUENCE [LARGE SCALE GENOMIC DNA]</scope>
    <source>
        <strain>Ss046</strain>
    </source>
</reference>
<keyword id="KW-1003">Cell membrane</keyword>
<keyword id="KW-0472">Membrane</keyword>
<keyword id="KW-1185">Reference proteome</keyword>
<keyword id="KW-0812">Transmembrane</keyword>
<keyword id="KW-1133">Transmembrane helix</keyword>
<evidence type="ECO:0000255" key="1"/>
<evidence type="ECO:0000305" key="2"/>
<gene>
    <name type="primary">yniD</name>
    <name type="ordered locus">SSON_1436</name>
</gene>
<name>YNID_SHISS</name>